<evidence type="ECO:0000250" key="1"/>
<evidence type="ECO:0000250" key="2">
    <source>
        <dbReference type="UniProtKB" id="P0A817"/>
    </source>
</evidence>
<evidence type="ECO:0000250" key="3">
    <source>
        <dbReference type="UniProtKB" id="P13444"/>
    </source>
</evidence>
<evidence type="ECO:0000250" key="4">
    <source>
        <dbReference type="UniProtKB" id="Q00266"/>
    </source>
</evidence>
<evidence type="ECO:0000250" key="5">
    <source>
        <dbReference type="UniProtKB" id="Q96551"/>
    </source>
</evidence>
<evidence type="ECO:0000305" key="6"/>
<accession>A9PDZ7</accession>
<accession>B9I6M4</accession>
<name>METK2_POPTR</name>
<feature type="chain" id="PRO_0000363043" description="S-adenosylmethionine synthase 2">
    <location>
        <begin position="1"/>
        <end position="393"/>
    </location>
</feature>
<feature type="binding site" evidence="3">
    <location>
        <position position="9"/>
    </location>
    <ligand>
        <name>Mg(2+)</name>
        <dbReference type="ChEBI" id="CHEBI:18420"/>
    </ligand>
</feature>
<feature type="binding site" description="in other chain" evidence="4">
    <location>
        <position position="15"/>
    </location>
    <ligand>
        <name>ATP</name>
        <dbReference type="ChEBI" id="CHEBI:30616"/>
        <note>ligand shared between two neighboring subunits</note>
    </ligand>
</feature>
<feature type="binding site" evidence="2">
    <location>
        <position position="43"/>
    </location>
    <ligand>
        <name>K(+)</name>
        <dbReference type="ChEBI" id="CHEBI:29103"/>
    </ligand>
</feature>
<feature type="binding site" description="in other chain" evidence="2">
    <location>
        <position position="56"/>
    </location>
    <ligand>
        <name>L-methionine</name>
        <dbReference type="ChEBI" id="CHEBI:57844"/>
        <note>ligand shared between two neighboring subunits</note>
    </ligand>
</feature>
<feature type="binding site" description="in other chain" evidence="2">
    <location>
        <position position="99"/>
    </location>
    <ligand>
        <name>L-methionine</name>
        <dbReference type="ChEBI" id="CHEBI:57844"/>
        <note>ligand shared between two neighboring subunits</note>
    </ligand>
</feature>
<feature type="binding site" description="in other chain" evidence="4">
    <location>
        <begin position="167"/>
        <end position="169"/>
    </location>
    <ligand>
        <name>ATP</name>
        <dbReference type="ChEBI" id="CHEBI:30616"/>
        <note>ligand shared between two neighboring subunits</note>
    </ligand>
</feature>
<feature type="binding site" description="in other chain" evidence="4">
    <location>
        <begin position="235"/>
        <end position="238"/>
    </location>
    <ligand>
        <name>ATP</name>
        <dbReference type="ChEBI" id="CHEBI:30616"/>
        <note>ligand shared between two neighboring subunits</note>
    </ligand>
</feature>
<feature type="binding site" description="in other chain" evidence="4">
    <location>
        <position position="246"/>
    </location>
    <ligand>
        <name>ATP</name>
        <dbReference type="ChEBI" id="CHEBI:30616"/>
        <note>ligand shared between two neighboring subunits</note>
    </ligand>
</feature>
<feature type="binding site" evidence="2">
    <location>
        <position position="246"/>
    </location>
    <ligand>
        <name>L-methionine</name>
        <dbReference type="ChEBI" id="CHEBI:57844"/>
        <note>ligand shared between two neighboring subunits</note>
    </ligand>
</feature>
<feature type="binding site" description="in other chain" evidence="2">
    <location>
        <begin position="252"/>
        <end position="253"/>
    </location>
    <ligand>
        <name>ATP</name>
        <dbReference type="ChEBI" id="CHEBI:30616"/>
        <note>ligand shared between two neighboring subunits</note>
    </ligand>
</feature>
<feature type="binding site" evidence="2">
    <location>
        <position position="269"/>
    </location>
    <ligand>
        <name>ATP</name>
        <dbReference type="ChEBI" id="CHEBI:30616"/>
        <note>ligand shared between two neighboring subunits</note>
    </ligand>
</feature>
<feature type="binding site" evidence="2">
    <location>
        <position position="273"/>
    </location>
    <ligand>
        <name>ATP</name>
        <dbReference type="ChEBI" id="CHEBI:30616"/>
        <note>ligand shared between two neighboring subunits</note>
    </ligand>
</feature>
<feature type="binding site" evidence="3">
    <location>
        <position position="277"/>
    </location>
    <ligand>
        <name>ATP</name>
        <dbReference type="ChEBI" id="CHEBI:30616"/>
        <note>ligand shared between two neighboring subunits</note>
    </ligand>
</feature>
<feature type="binding site" description="in other chain" evidence="2">
    <location>
        <position position="277"/>
    </location>
    <ligand>
        <name>L-methionine</name>
        <dbReference type="ChEBI" id="CHEBI:57844"/>
        <note>ligand shared between two neighboring subunits</note>
    </ligand>
</feature>
<feature type="sequence conflict" description="In Ref. 2; ABK94600." evidence="6" ref="2">
    <original>F</original>
    <variation>L</variation>
    <location>
        <position position="177"/>
    </location>
</feature>
<proteinExistence type="evidence at transcript level"/>
<reference key="1">
    <citation type="journal article" date="2006" name="Science">
        <title>The genome of black cottonwood, Populus trichocarpa (Torr. &amp; Gray).</title>
        <authorList>
            <person name="Tuskan G.A."/>
            <person name="Difazio S."/>
            <person name="Jansson S."/>
            <person name="Bohlmann J."/>
            <person name="Grigoriev I."/>
            <person name="Hellsten U."/>
            <person name="Putnam N."/>
            <person name="Ralph S."/>
            <person name="Rombauts S."/>
            <person name="Salamov A."/>
            <person name="Schein J."/>
            <person name="Sterck L."/>
            <person name="Aerts A."/>
            <person name="Bhalerao R.R."/>
            <person name="Bhalerao R.P."/>
            <person name="Blaudez D."/>
            <person name="Boerjan W."/>
            <person name="Brun A."/>
            <person name="Brunner A."/>
            <person name="Busov V."/>
            <person name="Campbell M."/>
            <person name="Carlson J."/>
            <person name="Chalot M."/>
            <person name="Chapman J."/>
            <person name="Chen G.-L."/>
            <person name="Cooper D."/>
            <person name="Coutinho P.M."/>
            <person name="Couturier J."/>
            <person name="Covert S."/>
            <person name="Cronk Q."/>
            <person name="Cunningham R."/>
            <person name="Davis J."/>
            <person name="Degroeve S."/>
            <person name="Dejardin A."/>
            <person name="dePamphilis C.W."/>
            <person name="Detter J."/>
            <person name="Dirks B."/>
            <person name="Dubchak I."/>
            <person name="Duplessis S."/>
            <person name="Ehlting J."/>
            <person name="Ellis B."/>
            <person name="Gendler K."/>
            <person name="Goodstein D."/>
            <person name="Gribskov M."/>
            <person name="Grimwood J."/>
            <person name="Groover A."/>
            <person name="Gunter L."/>
            <person name="Hamberger B."/>
            <person name="Heinze B."/>
            <person name="Helariutta Y."/>
            <person name="Henrissat B."/>
            <person name="Holligan D."/>
            <person name="Holt R."/>
            <person name="Huang W."/>
            <person name="Islam-Faridi N."/>
            <person name="Jones S."/>
            <person name="Jones-Rhoades M."/>
            <person name="Jorgensen R."/>
            <person name="Joshi C."/>
            <person name="Kangasjaervi J."/>
            <person name="Karlsson J."/>
            <person name="Kelleher C."/>
            <person name="Kirkpatrick R."/>
            <person name="Kirst M."/>
            <person name="Kohler A."/>
            <person name="Kalluri U."/>
            <person name="Larimer F."/>
            <person name="Leebens-Mack J."/>
            <person name="Leple J.-C."/>
            <person name="Locascio P."/>
            <person name="Lou Y."/>
            <person name="Lucas S."/>
            <person name="Martin F."/>
            <person name="Montanini B."/>
            <person name="Napoli C."/>
            <person name="Nelson D.R."/>
            <person name="Nelson C."/>
            <person name="Nieminen K."/>
            <person name="Nilsson O."/>
            <person name="Pereda V."/>
            <person name="Peter G."/>
            <person name="Philippe R."/>
            <person name="Pilate G."/>
            <person name="Poliakov A."/>
            <person name="Razumovskaya J."/>
            <person name="Richardson P."/>
            <person name="Rinaldi C."/>
            <person name="Ritland K."/>
            <person name="Rouze P."/>
            <person name="Ryaboy D."/>
            <person name="Schmutz J."/>
            <person name="Schrader J."/>
            <person name="Segerman B."/>
            <person name="Shin H."/>
            <person name="Siddiqui A."/>
            <person name="Sterky F."/>
            <person name="Terry A."/>
            <person name="Tsai C.-J."/>
            <person name="Uberbacher E."/>
            <person name="Unneberg P."/>
            <person name="Vahala J."/>
            <person name="Wall K."/>
            <person name="Wessler S."/>
            <person name="Yang G."/>
            <person name="Yin T."/>
            <person name="Douglas C."/>
            <person name="Marra M."/>
            <person name="Sandberg G."/>
            <person name="Van de Peer Y."/>
            <person name="Rokhsar D.S."/>
        </authorList>
    </citation>
    <scope>NUCLEOTIDE SEQUENCE [LARGE SCALE GENOMIC DNA]</scope>
    <source>
        <strain>cv. Nisqually</strain>
    </source>
</reference>
<reference key="2">
    <citation type="submission" date="2006-11" db="EMBL/GenBank/DDBJ databases">
        <title>The poplar transcriptome: Analysis of ca. 4,700 sequence-verified full-length cDNAs.</title>
        <authorList>
            <person name="Ralph S.G."/>
            <person name="Chun H.J.E."/>
            <person name="Cooper D."/>
            <person name="Kirkpatrick R."/>
            <person name="Palmquist D."/>
            <person name="Wynhoven B."/>
            <person name="Kolosova N."/>
            <person name="Oddy C."/>
            <person name="Jancsik S."/>
            <person name="Douglas C.J."/>
            <person name="Liu J."/>
            <person name="Butterfield Y.S.N."/>
            <person name="Stott J."/>
            <person name="Yang G."/>
            <person name="Holt R.A."/>
            <person name="Siddiqui A."/>
            <person name="Jones S.J.M."/>
            <person name="Marra M.A."/>
            <person name="Ritland K."/>
            <person name="Bohlmann J."/>
        </authorList>
    </citation>
    <scope>NUCLEOTIDE SEQUENCE [LARGE SCALE MRNA]</scope>
    <source>
        <strain>cv. Nisqually</strain>
        <tissue>Cambium</tissue>
        <tissue>Phloem</tissue>
    </source>
</reference>
<gene>
    <name type="primary">METK2</name>
    <name type="ORF">POPTR_0013s00550g</name>
</gene>
<dbReference type="EC" id="2.5.1.6" evidence="5"/>
<dbReference type="EMBL" id="CM009302">
    <property type="protein sequence ID" value="EEE95386.1"/>
    <property type="molecule type" value="Genomic_DNA"/>
</dbReference>
<dbReference type="EMBL" id="EF146533">
    <property type="protein sequence ID" value="ABK94600.1"/>
    <property type="molecule type" value="mRNA"/>
</dbReference>
<dbReference type="RefSeq" id="XP_002319463.1">
    <property type="nucleotide sequence ID" value="XM_002319427.2"/>
</dbReference>
<dbReference type="SMR" id="A9PDZ7"/>
<dbReference type="FunCoup" id="A9PDZ7">
    <property type="interactions" value="2789"/>
</dbReference>
<dbReference type="STRING" id="3694.A9PDZ7"/>
<dbReference type="GeneID" id="7478878"/>
<dbReference type="KEGG" id="pop:7478878"/>
<dbReference type="eggNOG" id="KOG1506">
    <property type="taxonomic scope" value="Eukaryota"/>
</dbReference>
<dbReference type="HOGENOM" id="CLU_041802_0_1_1"/>
<dbReference type="InParanoid" id="A9PDZ7"/>
<dbReference type="OrthoDB" id="5852090at2759"/>
<dbReference type="UniPathway" id="UPA00315">
    <property type="reaction ID" value="UER00080"/>
</dbReference>
<dbReference type="Proteomes" id="UP000006729">
    <property type="component" value="Chromosome 13"/>
</dbReference>
<dbReference type="ExpressionAtlas" id="A9PDZ7">
    <property type="expression patterns" value="differential"/>
</dbReference>
<dbReference type="GO" id="GO:0005829">
    <property type="term" value="C:cytosol"/>
    <property type="evidence" value="ECO:0000318"/>
    <property type="project" value="GO_Central"/>
</dbReference>
<dbReference type="GO" id="GO:0005524">
    <property type="term" value="F:ATP binding"/>
    <property type="evidence" value="ECO:0007669"/>
    <property type="project" value="UniProtKB-KW"/>
</dbReference>
<dbReference type="GO" id="GO:0046872">
    <property type="term" value="F:metal ion binding"/>
    <property type="evidence" value="ECO:0007669"/>
    <property type="project" value="UniProtKB-KW"/>
</dbReference>
<dbReference type="GO" id="GO:0004478">
    <property type="term" value="F:methionine adenosyltransferase activity"/>
    <property type="evidence" value="ECO:0000318"/>
    <property type="project" value="GO_Central"/>
</dbReference>
<dbReference type="GO" id="GO:0006730">
    <property type="term" value="P:one-carbon metabolic process"/>
    <property type="evidence" value="ECO:0007669"/>
    <property type="project" value="UniProtKB-KW"/>
</dbReference>
<dbReference type="GO" id="GO:0006556">
    <property type="term" value="P:S-adenosylmethionine biosynthetic process"/>
    <property type="evidence" value="ECO:0000318"/>
    <property type="project" value="GO_Central"/>
</dbReference>
<dbReference type="CDD" id="cd18079">
    <property type="entry name" value="S-AdoMet_synt"/>
    <property type="match status" value="1"/>
</dbReference>
<dbReference type="FunFam" id="3.30.300.10:FF:000001">
    <property type="entry name" value="S-adenosylmethionine synthase"/>
    <property type="match status" value="1"/>
</dbReference>
<dbReference type="FunFam" id="3.30.300.10:FF:000003">
    <property type="entry name" value="S-adenosylmethionine synthase"/>
    <property type="match status" value="1"/>
</dbReference>
<dbReference type="FunFam" id="3.30.300.10:FF:000004">
    <property type="entry name" value="S-adenosylmethionine synthase"/>
    <property type="match status" value="1"/>
</dbReference>
<dbReference type="Gene3D" id="3.30.300.10">
    <property type="match status" value="3"/>
</dbReference>
<dbReference type="HAMAP" id="MF_00086">
    <property type="entry name" value="S_AdoMet_synth1"/>
    <property type="match status" value="1"/>
</dbReference>
<dbReference type="InterPro" id="IPR022631">
    <property type="entry name" value="ADOMET_SYNTHASE_CS"/>
</dbReference>
<dbReference type="InterPro" id="IPR022630">
    <property type="entry name" value="S-AdoMet_synt_C"/>
</dbReference>
<dbReference type="InterPro" id="IPR022629">
    <property type="entry name" value="S-AdoMet_synt_central"/>
</dbReference>
<dbReference type="InterPro" id="IPR022628">
    <property type="entry name" value="S-AdoMet_synt_N"/>
</dbReference>
<dbReference type="InterPro" id="IPR002133">
    <property type="entry name" value="S-AdoMet_synthetase"/>
</dbReference>
<dbReference type="InterPro" id="IPR022636">
    <property type="entry name" value="S-AdoMet_synthetase_sfam"/>
</dbReference>
<dbReference type="NCBIfam" id="TIGR01034">
    <property type="entry name" value="metK"/>
    <property type="match status" value="1"/>
</dbReference>
<dbReference type="PANTHER" id="PTHR11964">
    <property type="entry name" value="S-ADENOSYLMETHIONINE SYNTHETASE"/>
    <property type="match status" value="1"/>
</dbReference>
<dbReference type="Pfam" id="PF02773">
    <property type="entry name" value="S-AdoMet_synt_C"/>
    <property type="match status" value="1"/>
</dbReference>
<dbReference type="Pfam" id="PF02772">
    <property type="entry name" value="S-AdoMet_synt_M"/>
    <property type="match status" value="1"/>
</dbReference>
<dbReference type="Pfam" id="PF00438">
    <property type="entry name" value="S-AdoMet_synt_N"/>
    <property type="match status" value="1"/>
</dbReference>
<dbReference type="PIRSF" id="PIRSF000497">
    <property type="entry name" value="MAT"/>
    <property type="match status" value="1"/>
</dbReference>
<dbReference type="SUPFAM" id="SSF55973">
    <property type="entry name" value="S-adenosylmethionine synthetase"/>
    <property type="match status" value="3"/>
</dbReference>
<dbReference type="PROSITE" id="PS00376">
    <property type="entry name" value="ADOMET_SYNTHASE_1"/>
    <property type="match status" value="1"/>
</dbReference>
<dbReference type="PROSITE" id="PS00377">
    <property type="entry name" value="ADOMET_SYNTHASE_2"/>
    <property type="match status" value="1"/>
</dbReference>
<organism>
    <name type="scientific">Populus trichocarpa</name>
    <name type="common">Western balsam poplar</name>
    <name type="synonym">Populus balsamifera subsp. trichocarpa</name>
    <dbReference type="NCBI Taxonomy" id="3694"/>
    <lineage>
        <taxon>Eukaryota</taxon>
        <taxon>Viridiplantae</taxon>
        <taxon>Streptophyta</taxon>
        <taxon>Embryophyta</taxon>
        <taxon>Tracheophyta</taxon>
        <taxon>Spermatophyta</taxon>
        <taxon>Magnoliopsida</taxon>
        <taxon>eudicotyledons</taxon>
        <taxon>Gunneridae</taxon>
        <taxon>Pentapetalae</taxon>
        <taxon>rosids</taxon>
        <taxon>fabids</taxon>
        <taxon>Malpighiales</taxon>
        <taxon>Salicaceae</taxon>
        <taxon>Saliceae</taxon>
        <taxon>Populus</taxon>
    </lineage>
</organism>
<keyword id="KW-0067">ATP-binding</keyword>
<keyword id="KW-0170">Cobalt</keyword>
<keyword id="KW-0963">Cytoplasm</keyword>
<keyword id="KW-0460">Magnesium</keyword>
<keyword id="KW-0479">Metal-binding</keyword>
<keyword id="KW-0547">Nucleotide-binding</keyword>
<keyword id="KW-0554">One-carbon metabolism</keyword>
<keyword id="KW-0630">Potassium</keyword>
<keyword id="KW-1185">Reference proteome</keyword>
<keyword id="KW-0808">Transferase</keyword>
<comment type="function">
    <text evidence="5">Catalyzes the formation of S-adenosylmethionine from methionine and ATP. The reaction comprises two steps that are both catalyzed by the same enzyme: formation of S-adenosylmethionine (AdoMet) and triphosphate, and subsequent hydrolysis of the triphosphate.</text>
</comment>
<comment type="catalytic activity">
    <reaction evidence="5">
        <text>L-methionine + ATP + H2O = S-adenosyl-L-methionine + phosphate + diphosphate</text>
        <dbReference type="Rhea" id="RHEA:21080"/>
        <dbReference type="ChEBI" id="CHEBI:15377"/>
        <dbReference type="ChEBI" id="CHEBI:30616"/>
        <dbReference type="ChEBI" id="CHEBI:33019"/>
        <dbReference type="ChEBI" id="CHEBI:43474"/>
        <dbReference type="ChEBI" id="CHEBI:57844"/>
        <dbReference type="ChEBI" id="CHEBI:59789"/>
        <dbReference type="EC" id="2.5.1.6"/>
    </reaction>
</comment>
<comment type="cofactor">
    <cofactor evidence="5">
        <name>Mn(2+)</name>
        <dbReference type="ChEBI" id="CHEBI:29035"/>
    </cofactor>
    <cofactor evidence="5">
        <name>Mg(2+)</name>
        <dbReference type="ChEBI" id="CHEBI:18420"/>
    </cofactor>
    <cofactor evidence="5">
        <name>Co(2+)</name>
        <dbReference type="ChEBI" id="CHEBI:48828"/>
    </cofactor>
    <text evidence="3 5">Binds 2 divalent ions per subunit. The metal ions interact primarily with the substrate (By similarity). Can utilize magnesium, manganese or cobalt (in vitro) (By similarity).</text>
</comment>
<comment type="cofactor">
    <cofactor evidence="5">
        <name>K(+)</name>
        <dbReference type="ChEBI" id="CHEBI:29103"/>
    </cofactor>
    <text evidence="3">Binds 1 potassium ion per subunit. The potassium ion interacts primarily with the substrate (By similarity).</text>
</comment>
<comment type="pathway">
    <text evidence="5">Amino-acid biosynthesis; S-adenosyl-L-methionine biosynthesis; S-adenosyl-L-methionine from L-methionine: step 1/1.</text>
</comment>
<comment type="subunit">
    <text evidence="1">Homotetramer.</text>
</comment>
<comment type="subcellular location">
    <subcellularLocation>
        <location evidence="1">Cytoplasm</location>
    </subcellularLocation>
</comment>
<comment type="similarity">
    <text evidence="6">Belongs to the AdoMet synthase family.</text>
</comment>
<sequence>METFLFTSESVNEGHPDKLCDQVSDAILDACLEQDPDSKVACETCTKTNMVMVFGEITTKANVDYEKIVRSTCRSIGFVSDDVGLDADKCNVLVNIEQQSPDIAQGVHGHLTKRPEEIGAGDQGHMFGYATDETPELMPLSHVLATKLGARLTEVRKNGTCPWLRPDGKTQVTVEYFNENGAMVPIRVHTVLISTQHDETVTNDEIAADLKEHVIKPVIPEKYLDEKTIFHLNPSGRFVIGGPHGDAGLTGRKIIIDTYGGWGAHGGGAFSGKDPTKVDRSGAYIVRQAAKSIVASGLARRCIVQVSYAIGVPEPLSVFVDTYGTGKIPDKEILNIVKEKFDFRPGMIAISLDLKRGGNGRFLKTAAYGHFGRDDPDFTWEVVKPLKSEKPQQ</sequence>
<protein>
    <recommendedName>
        <fullName>S-adenosylmethionine synthase 2</fullName>
        <shortName>AdoMet synthase 2</shortName>
        <ecNumber evidence="5">2.5.1.6</ecNumber>
    </recommendedName>
    <alternativeName>
        <fullName>Methionine adenosyltransferase 2</fullName>
        <shortName>MAT 2</shortName>
    </alternativeName>
</protein>